<evidence type="ECO:0000250" key="1">
    <source>
        <dbReference type="UniProtKB" id="A6NI79"/>
    </source>
</evidence>
<evidence type="ECO:0000255" key="2"/>
<evidence type="ECO:0000256" key="3">
    <source>
        <dbReference type="SAM" id="MobiDB-lite"/>
    </source>
</evidence>
<evidence type="ECO:0000305" key="4"/>
<name>CCD69_DANRE</name>
<sequence>MGCHNSKVCGQVSKKKKKNKAQEGEKRTKDIKLQDGRGTHSSEEERCCLENQLENYEWQLKILHAVLTASGDQEREQLLKDHPGDICTLVHSITEKVKTEISADLNDLHEQQMRSVSEQHQSETEELQRLHSEEKNVLNESHAAAEEALKDQIEDLTSELKLFNELKRRAEASTLKRDLQRNIETHGSPGEFWEQEQESLLFVIEMKRQNLQDQGNKLLQMEAQVEKNLSLEDQLLQALQQNEDFRVRIENYQSLIQQLSKEQNDMQEVLEKQSLQNQKLIQEKEELLFKLLHRRDSCSTFHLPSVIPTQVSPS</sequence>
<protein>
    <recommendedName>
        <fullName>Coiled-coil domain-containing protein 69</fullName>
    </recommendedName>
</protein>
<gene>
    <name type="primary">ccdc69</name>
</gene>
<accession>A7MC22</accession>
<keyword id="KW-0175">Coiled coil</keyword>
<keyword id="KW-0963">Cytoplasm</keyword>
<keyword id="KW-0206">Cytoskeleton</keyword>
<keyword id="KW-0449">Lipoprotein</keyword>
<keyword id="KW-0519">Myristate</keyword>
<keyword id="KW-1185">Reference proteome</keyword>
<proteinExistence type="evidence at transcript level"/>
<comment type="function">
    <text evidence="1">May act as a scaffold to regulate the recruitment and assembly of spindle midzone components.</text>
</comment>
<comment type="subcellular location">
    <subcellularLocation>
        <location evidence="1">Cytoplasm</location>
        <location evidence="1">Cytoskeleton</location>
        <location evidence="1">Spindle</location>
    </subcellularLocation>
    <subcellularLocation>
        <location evidence="1">Midbody</location>
    </subcellularLocation>
    <text evidence="1">During early anaphase, localizes along overlapping interpolar microtubules between the separating chromosomes. During late anaphase, localizes to the center of spindle midzone. Concentrated at the midbody during telophase.</text>
</comment>
<comment type="similarity">
    <text evidence="4">Belongs to the CCDC69 family.</text>
</comment>
<comment type="sequence caution" evidence="4">
    <conflict type="erroneous initiation">
        <sequence resource="EMBL-CDS" id="AAI52014"/>
    </conflict>
</comment>
<dbReference type="EMBL" id="BC152013">
    <property type="protein sequence ID" value="AAI52014.1"/>
    <property type="status" value="ALT_INIT"/>
    <property type="molecule type" value="mRNA"/>
</dbReference>
<dbReference type="SMR" id="A7MC22"/>
<dbReference type="FunCoup" id="A7MC22">
    <property type="interactions" value="22"/>
</dbReference>
<dbReference type="STRING" id="7955.ENSDARP00000152039"/>
<dbReference type="PeptideAtlas" id="A7MC22"/>
<dbReference type="AGR" id="ZFIN:ZDB-GENE-120720-3"/>
<dbReference type="ZFIN" id="ZDB-GENE-120720-3">
    <property type="gene designation" value="ccdc69"/>
</dbReference>
<dbReference type="InParanoid" id="A7MC22"/>
<dbReference type="PRO" id="PR:A7MC22"/>
<dbReference type="Proteomes" id="UP000000437">
    <property type="component" value="Unplaced"/>
</dbReference>
<dbReference type="GO" id="GO:0005737">
    <property type="term" value="C:cytoplasm"/>
    <property type="evidence" value="ECO:0007669"/>
    <property type="project" value="UniProtKB-KW"/>
</dbReference>
<dbReference type="GO" id="GO:0030496">
    <property type="term" value="C:midbody"/>
    <property type="evidence" value="ECO:0007669"/>
    <property type="project" value="UniProtKB-SubCell"/>
</dbReference>
<dbReference type="GO" id="GO:0005634">
    <property type="term" value="C:nucleus"/>
    <property type="evidence" value="ECO:0000318"/>
    <property type="project" value="GO_Central"/>
</dbReference>
<dbReference type="GO" id="GO:0051233">
    <property type="term" value="C:spindle midzone"/>
    <property type="evidence" value="ECO:0000250"/>
    <property type="project" value="UniProtKB"/>
</dbReference>
<dbReference type="GO" id="GO:0008017">
    <property type="term" value="F:microtubule binding"/>
    <property type="evidence" value="ECO:0000318"/>
    <property type="project" value="GO_Central"/>
</dbReference>
<dbReference type="GO" id="GO:0051255">
    <property type="term" value="P:spindle midzone assembly"/>
    <property type="evidence" value="ECO:0000250"/>
    <property type="project" value="UniProtKB"/>
</dbReference>
<dbReference type="InterPro" id="IPR051293">
    <property type="entry name" value="MTUS1/CCDC69"/>
</dbReference>
<dbReference type="PANTHER" id="PTHR24200:SF6">
    <property type="entry name" value="COILED-COIL DOMAIN-CONTAINING PROTEIN 69"/>
    <property type="match status" value="1"/>
</dbReference>
<dbReference type="PANTHER" id="PTHR24200">
    <property type="entry name" value="TOUCAN, ISOFORM A"/>
    <property type="match status" value="1"/>
</dbReference>
<feature type="initiator methionine" description="Removed" evidence="2">
    <location>
        <position position="1"/>
    </location>
</feature>
<feature type="chain" id="PRO_0000328964" description="Coiled-coil domain-containing protein 69">
    <location>
        <begin position="2"/>
        <end position="314"/>
    </location>
</feature>
<feature type="region of interest" description="Disordered" evidence="3">
    <location>
        <begin position="1"/>
        <end position="43"/>
    </location>
</feature>
<feature type="region of interest" description="Disordered" evidence="3">
    <location>
        <begin position="114"/>
        <end position="133"/>
    </location>
</feature>
<feature type="coiled-coil region" evidence="2">
    <location>
        <begin position="106"/>
        <end position="291"/>
    </location>
</feature>
<feature type="compositionally biased region" description="Low complexity" evidence="3">
    <location>
        <begin position="1"/>
        <end position="12"/>
    </location>
</feature>
<feature type="compositionally biased region" description="Basic and acidic residues" evidence="3">
    <location>
        <begin position="20"/>
        <end position="43"/>
    </location>
</feature>
<feature type="compositionally biased region" description="Basic and acidic residues" evidence="3">
    <location>
        <begin position="120"/>
        <end position="133"/>
    </location>
</feature>
<feature type="lipid moiety-binding region" description="N-myristoyl glycine" evidence="2">
    <location>
        <position position="2"/>
    </location>
</feature>
<organism>
    <name type="scientific">Danio rerio</name>
    <name type="common">Zebrafish</name>
    <name type="synonym">Brachydanio rerio</name>
    <dbReference type="NCBI Taxonomy" id="7955"/>
    <lineage>
        <taxon>Eukaryota</taxon>
        <taxon>Metazoa</taxon>
        <taxon>Chordata</taxon>
        <taxon>Craniata</taxon>
        <taxon>Vertebrata</taxon>
        <taxon>Euteleostomi</taxon>
        <taxon>Actinopterygii</taxon>
        <taxon>Neopterygii</taxon>
        <taxon>Teleostei</taxon>
        <taxon>Ostariophysi</taxon>
        <taxon>Cypriniformes</taxon>
        <taxon>Danionidae</taxon>
        <taxon>Danioninae</taxon>
        <taxon>Danio</taxon>
    </lineage>
</organism>
<reference key="1">
    <citation type="submission" date="2007-08" db="EMBL/GenBank/DDBJ databases">
        <authorList>
            <consortium name="NIH - Zebrafish Gene Collection (ZGC) project"/>
        </authorList>
    </citation>
    <scope>NUCLEOTIDE SEQUENCE [LARGE SCALE MRNA]</scope>
    <source>
        <tissue>Ovary</tissue>
    </source>
</reference>